<keyword id="KW-0687">Ribonucleoprotein</keyword>
<keyword id="KW-0689">Ribosomal protein</keyword>
<keyword id="KW-0694">RNA-binding</keyword>
<keyword id="KW-0699">rRNA-binding</keyword>
<accession>Q4UKD2</accession>
<protein>
    <recommendedName>
        <fullName evidence="1">Large ribosomal subunit protein uL10</fullName>
    </recommendedName>
    <alternativeName>
        <fullName evidence="2">50S ribosomal protein L10</fullName>
    </alternativeName>
</protein>
<comment type="function">
    <text evidence="1">Forms part of the ribosomal stalk, playing a central role in the interaction of the ribosome with GTP-bound translation factors.</text>
</comment>
<comment type="subunit">
    <text evidence="1">Part of the ribosomal stalk of the 50S ribosomal subunit. The N-terminus interacts with L11 and the large rRNA to form the base of the stalk. The C-terminus forms an elongated spine to which L12 dimers bind in a sequential fashion forming a multimeric L10(L12)X complex.</text>
</comment>
<comment type="similarity">
    <text evidence="1">Belongs to the universal ribosomal protein uL10 family.</text>
</comment>
<organism>
    <name type="scientific">Rickettsia felis (strain ATCC VR-1525 / URRWXCal2)</name>
    <name type="common">Rickettsia azadi</name>
    <dbReference type="NCBI Taxonomy" id="315456"/>
    <lineage>
        <taxon>Bacteria</taxon>
        <taxon>Pseudomonadati</taxon>
        <taxon>Pseudomonadota</taxon>
        <taxon>Alphaproteobacteria</taxon>
        <taxon>Rickettsiales</taxon>
        <taxon>Rickettsiaceae</taxon>
        <taxon>Rickettsieae</taxon>
        <taxon>Rickettsia</taxon>
        <taxon>spotted fever group</taxon>
    </lineage>
</organism>
<feature type="chain" id="PRO_0000234881" description="Large ribosomal subunit protein uL10">
    <location>
        <begin position="1"/>
        <end position="169"/>
    </location>
</feature>
<proteinExistence type="inferred from homology"/>
<evidence type="ECO:0000255" key="1">
    <source>
        <dbReference type="HAMAP-Rule" id="MF_00362"/>
    </source>
</evidence>
<evidence type="ECO:0000305" key="2"/>
<gene>
    <name evidence="1" type="primary">rplJ</name>
    <name type="ordered locus">RF_1148</name>
</gene>
<sequence>MLRSEKPVAVEDIVNIYKESPSVIITHYHGLTVSQVSSLRDSLKSKEAGFKVVKNTLAKIAANQTGLDSIANLFAGPTAIVYSKEPVEMAKLVVNFAKANDNLKIIGGIVDNHVLDEHSIKELSKLPSLNELRGKIVGLLQAPATKVVGVLQAPSSSMARVIQAHASKN</sequence>
<name>RL10_RICFE</name>
<dbReference type="EMBL" id="CP000053">
    <property type="protein sequence ID" value="AAY61999.1"/>
    <property type="molecule type" value="Genomic_DNA"/>
</dbReference>
<dbReference type="SMR" id="Q4UKD2"/>
<dbReference type="STRING" id="315456.RF_1148"/>
<dbReference type="KEGG" id="rfe:RF_1148"/>
<dbReference type="eggNOG" id="COG0244">
    <property type="taxonomic scope" value="Bacteria"/>
</dbReference>
<dbReference type="HOGENOM" id="CLU_092227_0_0_5"/>
<dbReference type="OrthoDB" id="9791972at2"/>
<dbReference type="Proteomes" id="UP000008548">
    <property type="component" value="Chromosome"/>
</dbReference>
<dbReference type="GO" id="GO:0015934">
    <property type="term" value="C:large ribosomal subunit"/>
    <property type="evidence" value="ECO:0007669"/>
    <property type="project" value="InterPro"/>
</dbReference>
<dbReference type="GO" id="GO:0070180">
    <property type="term" value="F:large ribosomal subunit rRNA binding"/>
    <property type="evidence" value="ECO:0007669"/>
    <property type="project" value="UniProtKB-UniRule"/>
</dbReference>
<dbReference type="GO" id="GO:0003735">
    <property type="term" value="F:structural constituent of ribosome"/>
    <property type="evidence" value="ECO:0007669"/>
    <property type="project" value="InterPro"/>
</dbReference>
<dbReference type="GO" id="GO:0006412">
    <property type="term" value="P:translation"/>
    <property type="evidence" value="ECO:0007669"/>
    <property type="project" value="UniProtKB-UniRule"/>
</dbReference>
<dbReference type="CDD" id="cd05797">
    <property type="entry name" value="Ribosomal_L10"/>
    <property type="match status" value="1"/>
</dbReference>
<dbReference type="Gene3D" id="3.30.70.1730">
    <property type="match status" value="1"/>
</dbReference>
<dbReference type="Gene3D" id="6.10.250.290">
    <property type="match status" value="1"/>
</dbReference>
<dbReference type="HAMAP" id="MF_00362">
    <property type="entry name" value="Ribosomal_uL10"/>
    <property type="match status" value="1"/>
</dbReference>
<dbReference type="InterPro" id="IPR001790">
    <property type="entry name" value="Ribosomal_uL10"/>
</dbReference>
<dbReference type="InterPro" id="IPR043141">
    <property type="entry name" value="Ribosomal_uL10-like_sf"/>
</dbReference>
<dbReference type="InterPro" id="IPR022973">
    <property type="entry name" value="Ribosomal_uL10_bac"/>
</dbReference>
<dbReference type="InterPro" id="IPR047865">
    <property type="entry name" value="Ribosomal_uL10_bac_type"/>
</dbReference>
<dbReference type="InterPro" id="IPR002363">
    <property type="entry name" value="Ribosomal_uL10_CS_bac"/>
</dbReference>
<dbReference type="NCBIfam" id="NF000955">
    <property type="entry name" value="PRK00099.1-1"/>
    <property type="match status" value="1"/>
</dbReference>
<dbReference type="PANTHER" id="PTHR11560">
    <property type="entry name" value="39S RIBOSOMAL PROTEIN L10, MITOCHONDRIAL"/>
    <property type="match status" value="1"/>
</dbReference>
<dbReference type="Pfam" id="PF00466">
    <property type="entry name" value="Ribosomal_L10"/>
    <property type="match status" value="1"/>
</dbReference>
<dbReference type="SUPFAM" id="SSF160369">
    <property type="entry name" value="Ribosomal protein L10-like"/>
    <property type="match status" value="1"/>
</dbReference>
<dbReference type="PROSITE" id="PS01109">
    <property type="entry name" value="RIBOSOMAL_L10"/>
    <property type="match status" value="1"/>
</dbReference>
<reference key="1">
    <citation type="journal article" date="2005" name="PLoS Biol.">
        <title>The genome sequence of Rickettsia felis identifies the first putative conjugative plasmid in an obligate intracellular parasite.</title>
        <authorList>
            <person name="Ogata H."/>
            <person name="Renesto P."/>
            <person name="Audic S."/>
            <person name="Robert C."/>
            <person name="Blanc G."/>
            <person name="Fournier P.-E."/>
            <person name="Parinello H."/>
            <person name="Claverie J.-M."/>
            <person name="Raoult D."/>
        </authorList>
    </citation>
    <scope>NUCLEOTIDE SEQUENCE [LARGE SCALE GENOMIC DNA]</scope>
    <source>
        <strain>ATCC VR-1525 / URRWXCal2</strain>
    </source>
</reference>